<comment type="function">
    <text evidence="1">Catalyzes the interconversion of 2-phosphoglycerate and 3-phosphoglycerate.</text>
</comment>
<comment type="catalytic activity">
    <reaction evidence="1">
        <text>(2R)-2-phosphoglycerate = (2R)-3-phosphoglycerate</text>
        <dbReference type="Rhea" id="RHEA:15901"/>
        <dbReference type="ChEBI" id="CHEBI:58272"/>
        <dbReference type="ChEBI" id="CHEBI:58289"/>
        <dbReference type="EC" id="5.4.2.12"/>
    </reaction>
</comment>
<comment type="pathway">
    <text evidence="1">Carbohydrate degradation; glycolysis; pyruvate from D-glyceraldehyde 3-phosphate: step 3/5.</text>
</comment>
<comment type="similarity">
    <text evidence="1">Belongs to the BPG-independent phosphoglycerate mutase family. A-PGAM subfamily.</text>
</comment>
<accession>Q6KZJ6</accession>
<reference key="1">
    <citation type="journal article" date="2004" name="Proc. Natl. Acad. Sci. U.S.A.">
        <title>Genome sequence of Picrophilus torridus and its implications for life around pH 0.</title>
        <authorList>
            <person name="Fuetterer O."/>
            <person name="Angelov A."/>
            <person name="Liesegang H."/>
            <person name="Gottschalk G."/>
            <person name="Schleper C."/>
            <person name="Schepers B."/>
            <person name="Dock C."/>
            <person name="Antranikian G."/>
            <person name="Liebl W."/>
        </authorList>
    </citation>
    <scope>NUCLEOTIDE SEQUENCE [LARGE SCALE GENOMIC DNA]</scope>
    <source>
        <strain>ATCC 700027 / DSM 9790 / JCM 10055 / NBRC 100828 / KAW 2/3</strain>
    </source>
</reference>
<protein>
    <recommendedName>
        <fullName evidence="1">2,3-bisphosphoglycerate-independent phosphoglycerate mutase</fullName>
        <shortName evidence="1">BPG-independent PGAM</shortName>
        <shortName evidence="1">Phosphoglyceromutase</shortName>
        <shortName evidence="1">aPGAM</shortName>
        <ecNumber evidence="1">5.4.2.12</ecNumber>
    </recommendedName>
</protein>
<name>APGM_PICTO</name>
<organism>
    <name type="scientific">Picrophilus torridus (strain ATCC 700027 / DSM 9790 / JCM 10055 / NBRC 100828 / KAW 2/3)</name>
    <dbReference type="NCBI Taxonomy" id="1122961"/>
    <lineage>
        <taxon>Archaea</taxon>
        <taxon>Methanobacteriati</taxon>
        <taxon>Thermoplasmatota</taxon>
        <taxon>Thermoplasmata</taxon>
        <taxon>Thermoplasmatales</taxon>
        <taxon>Picrophilaceae</taxon>
        <taxon>Picrophilus</taxon>
    </lineage>
</organism>
<gene>
    <name evidence="1" type="primary">apgM</name>
    <name type="ordered locus">PTO1271</name>
</gene>
<dbReference type="EC" id="5.4.2.12" evidence="1"/>
<dbReference type="EMBL" id="AE017261">
    <property type="protein sequence ID" value="AAT43856.1"/>
    <property type="molecule type" value="Genomic_DNA"/>
</dbReference>
<dbReference type="RefSeq" id="WP_011178072.1">
    <property type="nucleotide sequence ID" value="NC_005877.1"/>
</dbReference>
<dbReference type="SMR" id="Q6KZJ6"/>
<dbReference type="FunCoup" id="Q6KZJ6">
    <property type="interactions" value="143"/>
</dbReference>
<dbReference type="STRING" id="263820.PTO1271"/>
<dbReference type="PaxDb" id="263820-PTO1271"/>
<dbReference type="GeneID" id="2845364"/>
<dbReference type="KEGG" id="pto:PTO1271"/>
<dbReference type="PATRIC" id="fig|263820.9.peg.1320"/>
<dbReference type="eggNOG" id="arCOG01696">
    <property type="taxonomic scope" value="Archaea"/>
</dbReference>
<dbReference type="HOGENOM" id="CLU_034906_2_0_2"/>
<dbReference type="InParanoid" id="Q6KZJ6"/>
<dbReference type="OrthoDB" id="52918at2157"/>
<dbReference type="UniPathway" id="UPA00109">
    <property type="reaction ID" value="UER00186"/>
</dbReference>
<dbReference type="Proteomes" id="UP000000438">
    <property type="component" value="Chromosome"/>
</dbReference>
<dbReference type="GO" id="GO:0046872">
    <property type="term" value="F:metal ion binding"/>
    <property type="evidence" value="ECO:0007669"/>
    <property type="project" value="InterPro"/>
</dbReference>
<dbReference type="GO" id="GO:0004619">
    <property type="term" value="F:phosphoglycerate mutase activity"/>
    <property type="evidence" value="ECO:0007669"/>
    <property type="project" value="UniProtKB-EC"/>
</dbReference>
<dbReference type="GO" id="GO:0006096">
    <property type="term" value="P:glycolytic process"/>
    <property type="evidence" value="ECO:0007669"/>
    <property type="project" value="UniProtKB-UniRule"/>
</dbReference>
<dbReference type="CDD" id="cd16011">
    <property type="entry name" value="iPGM_like"/>
    <property type="match status" value="1"/>
</dbReference>
<dbReference type="Gene3D" id="3.40.720.10">
    <property type="entry name" value="Alkaline Phosphatase, subunit A"/>
    <property type="match status" value="2"/>
</dbReference>
<dbReference type="HAMAP" id="MF_01402_A">
    <property type="entry name" value="ApgM_A"/>
    <property type="match status" value="1"/>
</dbReference>
<dbReference type="InterPro" id="IPR017850">
    <property type="entry name" value="Alkaline_phosphatase_core_sf"/>
</dbReference>
<dbReference type="InterPro" id="IPR023665">
    <property type="entry name" value="ApgAM_prokaryotes"/>
</dbReference>
<dbReference type="InterPro" id="IPR006124">
    <property type="entry name" value="Metalloenzyme"/>
</dbReference>
<dbReference type="InterPro" id="IPR004456">
    <property type="entry name" value="Pglycerate_mutase_ApgM"/>
</dbReference>
<dbReference type="NCBIfam" id="TIGR00306">
    <property type="entry name" value="apgM"/>
    <property type="match status" value="1"/>
</dbReference>
<dbReference type="NCBIfam" id="NF003104">
    <property type="entry name" value="PRK04024.1"/>
    <property type="match status" value="1"/>
</dbReference>
<dbReference type="PANTHER" id="PTHR31209">
    <property type="entry name" value="COFACTOR-INDEPENDENT PHOSPHOGLYCERATE MUTASE"/>
    <property type="match status" value="1"/>
</dbReference>
<dbReference type="PANTHER" id="PTHR31209:SF0">
    <property type="entry name" value="METALLOENZYME DOMAIN-CONTAINING PROTEIN"/>
    <property type="match status" value="1"/>
</dbReference>
<dbReference type="Pfam" id="PF01676">
    <property type="entry name" value="Metalloenzyme"/>
    <property type="match status" value="1"/>
</dbReference>
<dbReference type="Pfam" id="PF10143">
    <property type="entry name" value="PhosphMutase"/>
    <property type="match status" value="1"/>
</dbReference>
<dbReference type="PIRSF" id="PIRSF006392">
    <property type="entry name" value="IPGAM_arch"/>
    <property type="match status" value="1"/>
</dbReference>
<dbReference type="SUPFAM" id="SSF53649">
    <property type="entry name" value="Alkaline phosphatase-like"/>
    <property type="match status" value="1"/>
</dbReference>
<sequence>MKNIVLLIMDGLGDNPNPEFFGKTALQAAYRPNLNALCRKSICGLMDPVGPGIRSGSDTSHLSILGYSPERYYNGRGPFEALGLGMELYPGDVAFRANYAYVSDGYVLDRRAGRIRDTCELSRAVSMEIEDVKITVKSGTEHRAAIVMHGPGLSSMVSDSDPHRENERPMEVRPLDKKAEKTARILNEFIKKSREILNKHPVNIKRMNQGLMPANEILIRGAGMVPDLEDFYDRYHLKAACISGTPLIKGICRLAGMDIINMDNLTGRVDENYSGIFEKAHELAKKYDFIIINIKGTDIAGHDRRPDIKRSVIENVDSAISKIINDLDDLLIIVTGDHSTPCNLGDHSGDPVPIMFSSNNIRSDNVMLFDETSVRNGSLRIRGLDVMKIALSLSNRSEKYGA</sequence>
<keyword id="KW-0324">Glycolysis</keyword>
<keyword id="KW-0413">Isomerase</keyword>
<feature type="chain" id="PRO_0000138141" description="2,3-bisphosphoglycerate-independent phosphoglycerate mutase">
    <location>
        <begin position="1"/>
        <end position="402"/>
    </location>
</feature>
<feature type="region of interest" description="Disordered" evidence="2">
    <location>
        <begin position="155"/>
        <end position="174"/>
    </location>
</feature>
<feature type="compositionally biased region" description="Basic and acidic residues" evidence="2">
    <location>
        <begin position="160"/>
        <end position="174"/>
    </location>
</feature>
<evidence type="ECO:0000255" key="1">
    <source>
        <dbReference type="HAMAP-Rule" id="MF_01402"/>
    </source>
</evidence>
<evidence type="ECO:0000256" key="2">
    <source>
        <dbReference type="SAM" id="MobiDB-lite"/>
    </source>
</evidence>
<proteinExistence type="inferred from homology"/>